<protein>
    <recommendedName>
        <fullName evidence="1">Urease accessory protein UreE</fullName>
    </recommendedName>
</protein>
<gene>
    <name evidence="1" type="primary">ureE</name>
    <name type="ordered locus">sync_2875</name>
</gene>
<organism>
    <name type="scientific">Synechococcus sp. (strain CC9311)</name>
    <dbReference type="NCBI Taxonomy" id="64471"/>
    <lineage>
        <taxon>Bacteria</taxon>
        <taxon>Bacillati</taxon>
        <taxon>Cyanobacteriota</taxon>
        <taxon>Cyanophyceae</taxon>
        <taxon>Synechococcales</taxon>
        <taxon>Synechococcaceae</taxon>
        <taxon>Synechococcus</taxon>
    </lineage>
</organism>
<reference key="1">
    <citation type="journal article" date="2006" name="Proc. Natl. Acad. Sci. U.S.A.">
        <title>Genome sequence of Synechococcus CC9311: insights into adaptation to a coastal environment.</title>
        <authorList>
            <person name="Palenik B."/>
            <person name="Ren Q."/>
            <person name="Dupont C.L."/>
            <person name="Myers G.S."/>
            <person name="Heidelberg J.F."/>
            <person name="Badger J.H."/>
            <person name="Madupu R."/>
            <person name="Nelson W.C."/>
            <person name="Brinkac L.M."/>
            <person name="Dodson R.J."/>
            <person name="Durkin A.S."/>
            <person name="Daugherty S.C."/>
            <person name="Sullivan S.A."/>
            <person name="Khouri H."/>
            <person name="Mohamoud Y."/>
            <person name="Halpin R."/>
            <person name="Paulsen I.T."/>
        </authorList>
    </citation>
    <scope>NUCLEOTIDE SEQUENCE [LARGE SCALE GENOMIC DNA]</scope>
    <source>
        <strain>CC9311</strain>
    </source>
</reference>
<evidence type="ECO:0000255" key="1">
    <source>
        <dbReference type="HAMAP-Rule" id="MF_00822"/>
    </source>
</evidence>
<comment type="function">
    <text evidence="1">Involved in urease metallocenter assembly. Binds nickel. Probably functions as a nickel donor during metallocenter assembly.</text>
</comment>
<comment type="subcellular location">
    <subcellularLocation>
        <location evidence="1">Cytoplasm</location>
    </subcellularLocation>
</comment>
<comment type="similarity">
    <text evidence="1">Belongs to the UreE family.</text>
</comment>
<proteinExistence type="inferred from homology"/>
<dbReference type="EMBL" id="CP000435">
    <property type="protein sequence ID" value="ABI45595.1"/>
    <property type="molecule type" value="Genomic_DNA"/>
</dbReference>
<dbReference type="RefSeq" id="WP_011620762.1">
    <property type="nucleotide sequence ID" value="NC_008319.1"/>
</dbReference>
<dbReference type="SMR" id="Q0I660"/>
<dbReference type="STRING" id="64471.sync_2875"/>
<dbReference type="KEGG" id="syg:sync_2875"/>
<dbReference type="eggNOG" id="COG2371">
    <property type="taxonomic scope" value="Bacteria"/>
</dbReference>
<dbReference type="HOGENOM" id="CLU_093757_2_0_3"/>
<dbReference type="OrthoDB" id="5421304at2"/>
<dbReference type="Proteomes" id="UP000001961">
    <property type="component" value="Chromosome"/>
</dbReference>
<dbReference type="GO" id="GO:0005737">
    <property type="term" value="C:cytoplasm"/>
    <property type="evidence" value="ECO:0007669"/>
    <property type="project" value="UniProtKB-SubCell"/>
</dbReference>
<dbReference type="GO" id="GO:0016151">
    <property type="term" value="F:nickel cation binding"/>
    <property type="evidence" value="ECO:0007669"/>
    <property type="project" value="UniProtKB-UniRule"/>
</dbReference>
<dbReference type="GO" id="GO:0051082">
    <property type="term" value="F:unfolded protein binding"/>
    <property type="evidence" value="ECO:0007669"/>
    <property type="project" value="UniProtKB-UniRule"/>
</dbReference>
<dbReference type="GO" id="GO:0006457">
    <property type="term" value="P:protein folding"/>
    <property type="evidence" value="ECO:0007669"/>
    <property type="project" value="InterPro"/>
</dbReference>
<dbReference type="GO" id="GO:0065003">
    <property type="term" value="P:protein-containing complex assembly"/>
    <property type="evidence" value="ECO:0007669"/>
    <property type="project" value="InterPro"/>
</dbReference>
<dbReference type="GO" id="GO:0019627">
    <property type="term" value="P:urea metabolic process"/>
    <property type="evidence" value="ECO:0007669"/>
    <property type="project" value="InterPro"/>
</dbReference>
<dbReference type="Gene3D" id="2.60.260.20">
    <property type="entry name" value="Urease metallochaperone UreE, N-terminal domain"/>
    <property type="match status" value="1"/>
</dbReference>
<dbReference type="Gene3D" id="3.30.70.790">
    <property type="entry name" value="UreE, C-terminal domain"/>
    <property type="match status" value="1"/>
</dbReference>
<dbReference type="HAMAP" id="MF_00822">
    <property type="entry name" value="UreE"/>
    <property type="match status" value="1"/>
</dbReference>
<dbReference type="InterPro" id="IPR012406">
    <property type="entry name" value="UreE"/>
</dbReference>
<dbReference type="InterPro" id="IPR007864">
    <property type="entry name" value="UreE_C_dom"/>
</dbReference>
<dbReference type="InterPro" id="IPR004029">
    <property type="entry name" value="UreE_N"/>
</dbReference>
<dbReference type="InterPro" id="IPR036118">
    <property type="entry name" value="UreE_N_sf"/>
</dbReference>
<dbReference type="NCBIfam" id="NF009756">
    <property type="entry name" value="PRK13261.2-2"/>
    <property type="match status" value="1"/>
</dbReference>
<dbReference type="Pfam" id="PF05194">
    <property type="entry name" value="UreE_C"/>
    <property type="match status" value="1"/>
</dbReference>
<dbReference type="PIRSF" id="PIRSF036402">
    <property type="entry name" value="Ureas_acces_UreE"/>
    <property type="match status" value="1"/>
</dbReference>
<dbReference type="SMART" id="SM00988">
    <property type="entry name" value="UreE_N"/>
    <property type="match status" value="1"/>
</dbReference>
<dbReference type="SUPFAM" id="SSF69737">
    <property type="entry name" value="Urease metallochaperone UreE, C-terminal domain"/>
    <property type="match status" value="1"/>
</dbReference>
<dbReference type="SUPFAM" id="SSF69287">
    <property type="entry name" value="Urease metallochaperone UreE, N-terminal domain"/>
    <property type="match status" value="1"/>
</dbReference>
<name>UREE_SYNS3</name>
<sequence>MDVGLTVLDHRLLSEEPWPNGSLAVMELPLSADQRTVLRGRRRTACGRDVLLQLPRERALMPGDRLTDAHEQVHVLVTAALEELLRVEAATPLALLEAAYHLGNRHVALELHEDELLLLNDSVLETMLKGRGLKLTRCCRSFMPEGGAYIAHQHA</sequence>
<feature type="chain" id="PRO_1000083914" description="Urease accessory protein UreE">
    <location>
        <begin position="1"/>
        <end position="155"/>
    </location>
</feature>
<keyword id="KW-0143">Chaperone</keyword>
<keyword id="KW-0963">Cytoplasm</keyword>
<keyword id="KW-0533">Nickel</keyword>
<keyword id="KW-0996">Nickel insertion</keyword>
<keyword id="KW-1185">Reference proteome</keyword>
<accession>Q0I660</accession>